<keyword id="KW-0963">Cytoplasm</keyword>
<comment type="subcellular location">
    <subcellularLocation>
        <location evidence="1">Cytoplasm</location>
        <location evidence="1">Nucleoid</location>
    </subcellularLocation>
</comment>
<comment type="similarity">
    <text evidence="1">Belongs to the YejK family.</text>
</comment>
<accession>B5XP20</accession>
<sequence length="335" mass="37825">MSLDIDQIALHQLIKRDEQNLELVLRESLLEPNATVVEMMAELHRVYSAKSKAYGLFNEESELAQALRLQRQGEEEFLAFSRAATGRLRDELAKYPFAEGGIVLFCQYRYLAVEYLLVAVLNNLSSMRVNEELDIRSTHYLDINHADIVARIDLTEWETNPESTRYLTFLKGRVGRKVADFFMDFLGASEGLNAKAQNRGLLQAVDDFAADAQLDKSERQNVRQQVYAYCNEQLQAGEEIELESLSKELAGVSEKSFQEFTAAQGYELEESFPADRSTLRQLTKFAGSGGGLTINFDAMLLGERVFWDPATDTLTIKGTPPNLRDQLQRRTSGGN</sequence>
<gene>
    <name type="ordered locus">KPK_1538</name>
</gene>
<dbReference type="EMBL" id="CP000964">
    <property type="protein sequence ID" value="ACI09041.1"/>
    <property type="molecule type" value="Genomic_DNA"/>
</dbReference>
<dbReference type="SMR" id="B5XP20"/>
<dbReference type="KEGG" id="kpe:KPK_1538"/>
<dbReference type="HOGENOM" id="CLU_063050_0_1_6"/>
<dbReference type="BioCyc" id="KPNE507522:GI0B-1538-MONOMER"/>
<dbReference type="Proteomes" id="UP000001734">
    <property type="component" value="Chromosome"/>
</dbReference>
<dbReference type="GO" id="GO:0043590">
    <property type="term" value="C:bacterial nucleoid"/>
    <property type="evidence" value="ECO:0007669"/>
    <property type="project" value="TreeGrafter"/>
</dbReference>
<dbReference type="GO" id="GO:0005737">
    <property type="term" value="C:cytoplasm"/>
    <property type="evidence" value="ECO:0007669"/>
    <property type="project" value="UniProtKB-UniRule"/>
</dbReference>
<dbReference type="GO" id="GO:0003690">
    <property type="term" value="F:double-stranded DNA binding"/>
    <property type="evidence" value="ECO:0007669"/>
    <property type="project" value="TreeGrafter"/>
</dbReference>
<dbReference type="GO" id="GO:0003727">
    <property type="term" value="F:single-stranded RNA binding"/>
    <property type="evidence" value="ECO:0007669"/>
    <property type="project" value="TreeGrafter"/>
</dbReference>
<dbReference type="HAMAP" id="MF_00730">
    <property type="entry name" value="NdpA"/>
    <property type="match status" value="1"/>
</dbReference>
<dbReference type="InterPro" id="IPR007358">
    <property type="entry name" value="Nucleoid_associated_NdpA"/>
</dbReference>
<dbReference type="NCBIfam" id="NF001557">
    <property type="entry name" value="PRK00378.1"/>
    <property type="match status" value="1"/>
</dbReference>
<dbReference type="PANTHER" id="PTHR38772">
    <property type="match status" value="1"/>
</dbReference>
<dbReference type="PANTHER" id="PTHR38772:SF1">
    <property type="entry name" value="NUCLEOID-ASSOCIATED PROTEIN YEJK"/>
    <property type="match status" value="1"/>
</dbReference>
<dbReference type="Pfam" id="PF04245">
    <property type="entry name" value="NA37"/>
    <property type="match status" value="1"/>
</dbReference>
<name>NDPA_KLEP3</name>
<proteinExistence type="inferred from homology"/>
<organism>
    <name type="scientific">Klebsiella pneumoniae (strain 342)</name>
    <dbReference type="NCBI Taxonomy" id="507522"/>
    <lineage>
        <taxon>Bacteria</taxon>
        <taxon>Pseudomonadati</taxon>
        <taxon>Pseudomonadota</taxon>
        <taxon>Gammaproteobacteria</taxon>
        <taxon>Enterobacterales</taxon>
        <taxon>Enterobacteriaceae</taxon>
        <taxon>Klebsiella/Raoultella group</taxon>
        <taxon>Klebsiella</taxon>
        <taxon>Klebsiella pneumoniae complex</taxon>
    </lineage>
</organism>
<protein>
    <recommendedName>
        <fullName evidence="1">Nucleoid-associated protein KPK_1538</fullName>
    </recommendedName>
</protein>
<reference key="1">
    <citation type="journal article" date="2008" name="PLoS Genet.">
        <title>Complete genome sequence of the N2-fixing broad host range endophyte Klebsiella pneumoniae 342 and virulence predictions verified in mice.</title>
        <authorList>
            <person name="Fouts D.E."/>
            <person name="Tyler H.L."/>
            <person name="DeBoy R.T."/>
            <person name="Daugherty S."/>
            <person name="Ren Q."/>
            <person name="Badger J.H."/>
            <person name="Durkin A.S."/>
            <person name="Huot H."/>
            <person name="Shrivastava S."/>
            <person name="Kothari S."/>
            <person name="Dodson R.J."/>
            <person name="Mohamoud Y."/>
            <person name="Khouri H."/>
            <person name="Roesch L.F.W."/>
            <person name="Krogfelt K.A."/>
            <person name="Struve C."/>
            <person name="Triplett E.W."/>
            <person name="Methe B.A."/>
        </authorList>
    </citation>
    <scope>NUCLEOTIDE SEQUENCE [LARGE SCALE GENOMIC DNA]</scope>
    <source>
        <strain>342</strain>
    </source>
</reference>
<feature type="chain" id="PRO_1000191566" description="Nucleoid-associated protein KPK_1538">
    <location>
        <begin position="1"/>
        <end position="335"/>
    </location>
</feature>
<evidence type="ECO:0000255" key="1">
    <source>
        <dbReference type="HAMAP-Rule" id="MF_00730"/>
    </source>
</evidence>